<gene>
    <name evidence="1" type="primary">pyrE</name>
    <name type="ordered locus">Rsph17025_0324</name>
</gene>
<protein>
    <recommendedName>
        <fullName evidence="1">Orotate phosphoribosyltransferase</fullName>
        <shortName evidence="1">OPRT</shortName>
        <shortName evidence="1">OPRTase</shortName>
        <ecNumber evidence="1">2.4.2.10</ecNumber>
    </recommendedName>
</protein>
<proteinExistence type="inferred from homology"/>
<sequence length="232" mass="25585">MIPTSFPPREEIARLTARMLLEIQAVHFRPHEPFTLASGLPSPTYIDCRKLISYPRIRATLMDFLTVTLLRDAGFEAFDNVAGGETAGIPFAAMMAERLALPMTYVRKKPKGYGRNARIEGVMTEGQRVLLVEDLTTDGGSKLSFVDAIRDTGATCAHTAVIFYYGIFPETIGRLQAHGVTLHHLCTWWDVLAEARASDAFDAGTLAEVECFLSNPRDWQDARKPADPAAGL</sequence>
<name>PYRE_CERS5</name>
<dbReference type="EC" id="2.4.2.10" evidence="1"/>
<dbReference type="EMBL" id="CP000661">
    <property type="protein sequence ID" value="ABP69230.1"/>
    <property type="molecule type" value="Genomic_DNA"/>
</dbReference>
<dbReference type="SMR" id="A4WPB6"/>
<dbReference type="STRING" id="349102.Rsph17025_0324"/>
<dbReference type="KEGG" id="rsq:Rsph17025_0324"/>
<dbReference type="eggNOG" id="COG0461">
    <property type="taxonomic scope" value="Bacteria"/>
</dbReference>
<dbReference type="HOGENOM" id="CLU_074878_1_0_5"/>
<dbReference type="BioCyc" id="RSPH349102:G1G8M-331-MONOMER"/>
<dbReference type="UniPathway" id="UPA00070">
    <property type="reaction ID" value="UER00119"/>
</dbReference>
<dbReference type="GO" id="GO:0000287">
    <property type="term" value="F:magnesium ion binding"/>
    <property type="evidence" value="ECO:0007669"/>
    <property type="project" value="UniProtKB-UniRule"/>
</dbReference>
<dbReference type="GO" id="GO:0004588">
    <property type="term" value="F:orotate phosphoribosyltransferase activity"/>
    <property type="evidence" value="ECO:0007669"/>
    <property type="project" value="UniProtKB-UniRule"/>
</dbReference>
<dbReference type="GO" id="GO:0044205">
    <property type="term" value="P:'de novo' UMP biosynthetic process"/>
    <property type="evidence" value="ECO:0007669"/>
    <property type="project" value="UniProtKB-UniRule"/>
</dbReference>
<dbReference type="GO" id="GO:0019856">
    <property type="term" value="P:pyrimidine nucleobase biosynthetic process"/>
    <property type="evidence" value="ECO:0007669"/>
    <property type="project" value="TreeGrafter"/>
</dbReference>
<dbReference type="CDD" id="cd06223">
    <property type="entry name" value="PRTases_typeI"/>
    <property type="match status" value="1"/>
</dbReference>
<dbReference type="Gene3D" id="3.40.50.2020">
    <property type="match status" value="1"/>
</dbReference>
<dbReference type="HAMAP" id="MF_01208">
    <property type="entry name" value="PyrE"/>
    <property type="match status" value="1"/>
</dbReference>
<dbReference type="InterPro" id="IPR023031">
    <property type="entry name" value="OPRT"/>
</dbReference>
<dbReference type="InterPro" id="IPR000836">
    <property type="entry name" value="PRibTrfase_dom"/>
</dbReference>
<dbReference type="InterPro" id="IPR029057">
    <property type="entry name" value="PRTase-like"/>
</dbReference>
<dbReference type="NCBIfam" id="NF001729">
    <property type="entry name" value="PRK00455.1-3"/>
    <property type="match status" value="1"/>
</dbReference>
<dbReference type="PANTHER" id="PTHR19278">
    <property type="entry name" value="OROTATE PHOSPHORIBOSYLTRANSFERASE"/>
    <property type="match status" value="1"/>
</dbReference>
<dbReference type="PANTHER" id="PTHR19278:SF9">
    <property type="entry name" value="URIDINE 5'-MONOPHOSPHATE SYNTHASE"/>
    <property type="match status" value="1"/>
</dbReference>
<dbReference type="Pfam" id="PF00156">
    <property type="entry name" value="Pribosyltran"/>
    <property type="match status" value="1"/>
</dbReference>
<dbReference type="SUPFAM" id="SSF53271">
    <property type="entry name" value="PRTase-like"/>
    <property type="match status" value="1"/>
</dbReference>
<reference key="1">
    <citation type="submission" date="2007-04" db="EMBL/GenBank/DDBJ databases">
        <title>Complete sequence of chromosome of Rhodobacter sphaeroides ATCC 17025.</title>
        <authorList>
            <consortium name="US DOE Joint Genome Institute"/>
            <person name="Copeland A."/>
            <person name="Lucas S."/>
            <person name="Lapidus A."/>
            <person name="Barry K."/>
            <person name="Detter J.C."/>
            <person name="Glavina del Rio T."/>
            <person name="Hammon N."/>
            <person name="Israni S."/>
            <person name="Dalin E."/>
            <person name="Tice H."/>
            <person name="Pitluck S."/>
            <person name="Chertkov O."/>
            <person name="Brettin T."/>
            <person name="Bruce D."/>
            <person name="Han C."/>
            <person name="Schmutz J."/>
            <person name="Larimer F."/>
            <person name="Land M."/>
            <person name="Hauser L."/>
            <person name="Kyrpides N."/>
            <person name="Kim E."/>
            <person name="Richardson P."/>
            <person name="Mackenzie C."/>
            <person name="Choudhary M."/>
            <person name="Donohue T.J."/>
            <person name="Kaplan S."/>
        </authorList>
    </citation>
    <scope>NUCLEOTIDE SEQUENCE [LARGE SCALE GENOMIC DNA]</scope>
    <source>
        <strain>ATCC 17025 / ATH 2.4.3</strain>
    </source>
</reference>
<accession>A4WPB6</accession>
<evidence type="ECO:0000255" key="1">
    <source>
        <dbReference type="HAMAP-Rule" id="MF_01208"/>
    </source>
</evidence>
<organism>
    <name type="scientific">Cereibacter sphaeroides (strain ATCC 17025 / ATH 2.4.3)</name>
    <name type="common">Rhodobacter sphaeroides</name>
    <dbReference type="NCBI Taxonomy" id="349102"/>
    <lineage>
        <taxon>Bacteria</taxon>
        <taxon>Pseudomonadati</taxon>
        <taxon>Pseudomonadota</taxon>
        <taxon>Alphaproteobacteria</taxon>
        <taxon>Rhodobacterales</taxon>
        <taxon>Paracoccaceae</taxon>
        <taxon>Cereibacter</taxon>
    </lineage>
</organism>
<feature type="chain" id="PRO_1000066288" description="Orotate phosphoribosyltransferase">
    <location>
        <begin position="1"/>
        <end position="232"/>
    </location>
</feature>
<feature type="binding site" evidence="1">
    <location>
        <position position="107"/>
    </location>
    <ligand>
        <name>5-phospho-alpha-D-ribose 1-diphosphate</name>
        <dbReference type="ChEBI" id="CHEBI:58017"/>
        <note>ligand shared between dimeric partners</note>
    </ligand>
</feature>
<feature type="binding site" description="in other chain" evidence="1">
    <location>
        <position position="108"/>
    </location>
    <ligand>
        <name>5-phospho-alpha-D-ribose 1-diphosphate</name>
        <dbReference type="ChEBI" id="CHEBI:58017"/>
        <note>ligand shared between dimeric partners</note>
    </ligand>
</feature>
<feature type="binding site" evidence="1">
    <location>
        <position position="111"/>
    </location>
    <ligand>
        <name>5-phospho-alpha-D-ribose 1-diphosphate</name>
        <dbReference type="ChEBI" id="CHEBI:58017"/>
        <note>ligand shared between dimeric partners</note>
    </ligand>
</feature>
<feature type="binding site" description="in other chain" evidence="1">
    <location>
        <begin position="133"/>
        <end position="141"/>
    </location>
    <ligand>
        <name>5-phospho-alpha-D-ribose 1-diphosphate</name>
        <dbReference type="ChEBI" id="CHEBI:58017"/>
        <note>ligand shared between dimeric partners</note>
    </ligand>
</feature>
<feature type="binding site" evidence="1">
    <location>
        <position position="137"/>
    </location>
    <ligand>
        <name>orotate</name>
        <dbReference type="ChEBI" id="CHEBI:30839"/>
    </ligand>
</feature>
<comment type="function">
    <text evidence="1">Catalyzes the transfer of a ribosyl phosphate group from 5-phosphoribose 1-diphosphate to orotate, leading to the formation of orotidine monophosphate (OMP).</text>
</comment>
<comment type="catalytic activity">
    <reaction evidence="1">
        <text>orotidine 5'-phosphate + diphosphate = orotate + 5-phospho-alpha-D-ribose 1-diphosphate</text>
        <dbReference type="Rhea" id="RHEA:10380"/>
        <dbReference type="ChEBI" id="CHEBI:30839"/>
        <dbReference type="ChEBI" id="CHEBI:33019"/>
        <dbReference type="ChEBI" id="CHEBI:57538"/>
        <dbReference type="ChEBI" id="CHEBI:58017"/>
        <dbReference type="EC" id="2.4.2.10"/>
    </reaction>
</comment>
<comment type="cofactor">
    <cofactor evidence="1">
        <name>Mg(2+)</name>
        <dbReference type="ChEBI" id="CHEBI:18420"/>
    </cofactor>
</comment>
<comment type="pathway">
    <text evidence="1">Pyrimidine metabolism; UMP biosynthesis via de novo pathway; UMP from orotate: step 1/2.</text>
</comment>
<comment type="subunit">
    <text evidence="1">Homodimer.</text>
</comment>
<comment type="similarity">
    <text evidence="1">Belongs to the purine/pyrimidine phosphoribosyltransferase family. PyrE subfamily.</text>
</comment>
<keyword id="KW-0328">Glycosyltransferase</keyword>
<keyword id="KW-0460">Magnesium</keyword>
<keyword id="KW-0665">Pyrimidine biosynthesis</keyword>
<keyword id="KW-0808">Transferase</keyword>